<name>RSMA_PORG3</name>
<organism>
    <name type="scientific">Porphyromonas gingivalis (strain ATCC 33277 / DSM 20709 / CIP 103683 / JCM 12257 / NCTC 11834 / 2561)</name>
    <dbReference type="NCBI Taxonomy" id="431947"/>
    <lineage>
        <taxon>Bacteria</taxon>
        <taxon>Pseudomonadati</taxon>
        <taxon>Bacteroidota</taxon>
        <taxon>Bacteroidia</taxon>
        <taxon>Bacteroidales</taxon>
        <taxon>Porphyromonadaceae</taxon>
        <taxon>Porphyromonas</taxon>
    </lineage>
</organism>
<feature type="chain" id="PRO_1000130305" description="Ribosomal RNA small subunit methyltransferase A">
    <location>
        <begin position="1"/>
        <end position="258"/>
    </location>
</feature>
<feature type="binding site" evidence="1">
    <location>
        <position position="13"/>
    </location>
    <ligand>
        <name>S-adenosyl-L-methionine</name>
        <dbReference type="ChEBI" id="CHEBI:59789"/>
    </ligand>
</feature>
<feature type="binding site" evidence="1">
    <location>
        <position position="15"/>
    </location>
    <ligand>
        <name>S-adenosyl-L-methionine</name>
        <dbReference type="ChEBI" id="CHEBI:59789"/>
    </ligand>
</feature>
<feature type="binding site" evidence="1">
    <location>
        <position position="40"/>
    </location>
    <ligand>
        <name>S-adenosyl-L-methionine</name>
        <dbReference type="ChEBI" id="CHEBI:59789"/>
    </ligand>
</feature>
<feature type="binding site" evidence="1">
    <location>
        <position position="61"/>
    </location>
    <ligand>
        <name>S-adenosyl-L-methionine</name>
        <dbReference type="ChEBI" id="CHEBI:59789"/>
    </ligand>
</feature>
<feature type="binding site" evidence="1">
    <location>
        <position position="85"/>
    </location>
    <ligand>
        <name>S-adenosyl-L-methionine</name>
        <dbReference type="ChEBI" id="CHEBI:59789"/>
    </ligand>
</feature>
<feature type="binding site" evidence="1">
    <location>
        <position position="106"/>
    </location>
    <ligand>
        <name>S-adenosyl-L-methionine</name>
        <dbReference type="ChEBI" id="CHEBI:59789"/>
    </ligand>
</feature>
<sequence length="258" mass="29411">MMRVKAKKALGQHFLRDLSIAERIADTLSEHKALPVLEIGPGMGVLTQFLLRKGHDVRVIEIDGESVSYLREEFPELSDRIIEGDFLHYPLSELFPGGRQYCLIGNYPYNISSQIFFRLLDVREQIPCCSGMLQREVAMRLASPPGKKDYGILSVLLQLWYNIEYLFTVDASVFDPPPKVQSGVIRLTRNDRKELPCSEKALKTVVKTAFGQRRKTLRNSLRGILPAGFDRFDEPVFSKRPEQLSPDDFIALTLLLQQ</sequence>
<evidence type="ECO:0000255" key="1">
    <source>
        <dbReference type="HAMAP-Rule" id="MF_00607"/>
    </source>
</evidence>
<reference key="1">
    <citation type="journal article" date="2008" name="DNA Res.">
        <title>Determination of the genome sequence of Porphyromonas gingivalis strain ATCC 33277 and genomic comparison with strain W83 revealed extensive genome rearrangements in P. gingivalis.</title>
        <authorList>
            <person name="Naito M."/>
            <person name="Hirakawa H."/>
            <person name="Yamashita A."/>
            <person name="Ohara N."/>
            <person name="Shoji M."/>
            <person name="Yukitake H."/>
            <person name="Nakayama K."/>
            <person name="Toh H."/>
            <person name="Yoshimura F."/>
            <person name="Kuhara S."/>
            <person name="Hattori M."/>
            <person name="Hayashi T."/>
            <person name="Nakayama K."/>
        </authorList>
    </citation>
    <scope>NUCLEOTIDE SEQUENCE [LARGE SCALE GENOMIC DNA]</scope>
    <source>
        <strain>ATCC 33277 / DSM 20709 / CIP 103683 / JCM 12257 / NCTC 11834 / 2561</strain>
    </source>
</reference>
<keyword id="KW-0963">Cytoplasm</keyword>
<keyword id="KW-0489">Methyltransferase</keyword>
<keyword id="KW-0694">RNA-binding</keyword>
<keyword id="KW-0698">rRNA processing</keyword>
<keyword id="KW-0949">S-adenosyl-L-methionine</keyword>
<keyword id="KW-0808">Transferase</keyword>
<protein>
    <recommendedName>
        <fullName evidence="1">Ribosomal RNA small subunit methyltransferase A</fullName>
        <ecNumber evidence="1">2.1.1.182</ecNumber>
    </recommendedName>
    <alternativeName>
        <fullName evidence="1">16S rRNA (adenine(1518)-N(6)/adenine(1519)-N(6))-dimethyltransferase</fullName>
    </alternativeName>
    <alternativeName>
        <fullName evidence="1">16S rRNA dimethyladenosine transferase</fullName>
    </alternativeName>
    <alternativeName>
        <fullName evidence="1">16S rRNA dimethylase</fullName>
    </alternativeName>
    <alternativeName>
        <fullName evidence="1">S-adenosylmethionine-6-N', N'-adenosyl(rRNA) dimethyltransferase</fullName>
    </alternativeName>
</protein>
<dbReference type="EC" id="2.1.1.182" evidence="1"/>
<dbReference type="EMBL" id="AP009380">
    <property type="protein sequence ID" value="BAG32767.1"/>
    <property type="molecule type" value="Genomic_DNA"/>
</dbReference>
<dbReference type="RefSeq" id="WP_004583779.1">
    <property type="nucleotide sequence ID" value="NZ_CP025930.1"/>
</dbReference>
<dbReference type="SMR" id="B2RHC2"/>
<dbReference type="GeneID" id="29255497"/>
<dbReference type="KEGG" id="pgn:PGN_0248"/>
<dbReference type="eggNOG" id="COG0030">
    <property type="taxonomic scope" value="Bacteria"/>
</dbReference>
<dbReference type="HOGENOM" id="CLU_041220_0_1_10"/>
<dbReference type="OrthoDB" id="9814755at2"/>
<dbReference type="BioCyc" id="PGIN431947:G1G2V-276-MONOMER"/>
<dbReference type="Proteomes" id="UP000008842">
    <property type="component" value="Chromosome"/>
</dbReference>
<dbReference type="GO" id="GO:0005829">
    <property type="term" value="C:cytosol"/>
    <property type="evidence" value="ECO:0007669"/>
    <property type="project" value="TreeGrafter"/>
</dbReference>
<dbReference type="GO" id="GO:0052908">
    <property type="term" value="F:16S rRNA (adenine(1518)-N(6)/adenine(1519)-N(6))-dimethyltransferase activity"/>
    <property type="evidence" value="ECO:0007669"/>
    <property type="project" value="UniProtKB-EC"/>
</dbReference>
<dbReference type="GO" id="GO:0003723">
    <property type="term" value="F:RNA binding"/>
    <property type="evidence" value="ECO:0007669"/>
    <property type="project" value="UniProtKB-KW"/>
</dbReference>
<dbReference type="FunFam" id="3.40.50.150:FF:000157">
    <property type="entry name" value="Ribosomal RNA small subunit methyltransferase A"/>
    <property type="match status" value="1"/>
</dbReference>
<dbReference type="Gene3D" id="1.10.8.100">
    <property type="entry name" value="Ribosomal RNA adenine dimethylase-like, domain 2"/>
    <property type="match status" value="1"/>
</dbReference>
<dbReference type="Gene3D" id="3.40.50.150">
    <property type="entry name" value="Vaccinia Virus protein VP39"/>
    <property type="match status" value="1"/>
</dbReference>
<dbReference type="HAMAP" id="MF_00607">
    <property type="entry name" value="16SrRNA_methyltr_A"/>
    <property type="match status" value="1"/>
</dbReference>
<dbReference type="InterPro" id="IPR001737">
    <property type="entry name" value="KsgA/Erm"/>
</dbReference>
<dbReference type="InterPro" id="IPR023165">
    <property type="entry name" value="rRNA_Ade_diMease-like_C"/>
</dbReference>
<dbReference type="InterPro" id="IPR020596">
    <property type="entry name" value="rRNA_Ade_Mease_Trfase_CS"/>
</dbReference>
<dbReference type="InterPro" id="IPR020598">
    <property type="entry name" value="rRNA_Ade_methylase_Trfase_N"/>
</dbReference>
<dbReference type="InterPro" id="IPR011530">
    <property type="entry name" value="rRNA_adenine_dimethylase"/>
</dbReference>
<dbReference type="InterPro" id="IPR029063">
    <property type="entry name" value="SAM-dependent_MTases_sf"/>
</dbReference>
<dbReference type="NCBIfam" id="TIGR00755">
    <property type="entry name" value="ksgA"/>
    <property type="match status" value="1"/>
</dbReference>
<dbReference type="PANTHER" id="PTHR11727">
    <property type="entry name" value="DIMETHYLADENOSINE TRANSFERASE"/>
    <property type="match status" value="1"/>
</dbReference>
<dbReference type="PANTHER" id="PTHR11727:SF7">
    <property type="entry name" value="DIMETHYLADENOSINE TRANSFERASE-RELATED"/>
    <property type="match status" value="1"/>
</dbReference>
<dbReference type="Pfam" id="PF00398">
    <property type="entry name" value="RrnaAD"/>
    <property type="match status" value="1"/>
</dbReference>
<dbReference type="SMART" id="SM00650">
    <property type="entry name" value="rADc"/>
    <property type="match status" value="1"/>
</dbReference>
<dbReference type="SUPFAM" id="SSF53335">
    <property type="entry name" value="S-adenosyl-L-methionine-dependent methyltransferases"/>
    <property type="match status" value="1"/>
</dbReference>
<dbReference type="PROSITE" id="PS01131">
    <property type="entry name" value="RRNA_A_DIMETH"/>
    <property type="match status" value="1"/>
</dbReference>
<dbReference type="PROSITE" id="PS51689">
    <property type="entry name" value="SAM_RNA_A_N6_MT"/>
    <property type="match status" value="1"/>
</dbReference>
<comment type="function">
    <text evidence="1">Specifically dimethylates two adjacent adenosines (A1518 and A1519) in the loop of a conserved hairpin near the 3'-end of 16S rRNA in the 30S particle. May play a critical role in biogenesis of 30S subunits.</text>
</comment>
<comment type="catalytic activity">
    <reaction evidence="1">
        <text>adenosine(1518)/adenosine(1519) in 16S rRNA + 4 S-adenosyl-L-methionine = N(6)-dimethyladenosine(1518)/N(6)-dimethyladenosine(1519) in 16S rRNA + 4 S-adenosyl-L-homocysteine + 4 H(+)</text>
        <dbReference type="Rhea" id="RHEA:19609"/>
        <dbReference type="Rhea" id="RHEA-COMP:10232"/>
        <dbReference type="Rhea" id="RHEA-COMP:10233"/>
        <dbReference type="ChEBI" id="CHEBI:15378"/>
        <dbReference type="ChEBI" id="CHEBI:57856"/>
        <dbReference type="ChEBI" id="CHEBI:59789"/>
        <dbReference type="ChEBI" id="CHEBI:74411"/>
        <dbReference type="ChEBI" id="CHEBI:74493"/>
        <dbReference type="EC" id="2.1.1.182"/>
    </reaction>
</comment>
<comment type="subcellular location">
    <subcellularLocation>
        <location evidence="1">Cytoplasm</location>
    </subcellularLocation>
</comment>
<comment type="similarity">
    <text evidence="1">Belongs to the class I-like SAM-binding methyltransferase superfamily. rRNA adenine N(6)-methyltransferase family. RsmA subfamily.</text>
</comment>
<gene>
    <name evidence="1" type="primary">rsmA</name>
    <name evidence="1" type="synonym">ksgA</name>
    <name type="ordered locus">PGN_0248</name>
</gene>
<accession>B2RHC2</accession>
<proteinExistence type="inferred from homology"/>